<keyword id="KW-0143">Chaperone</keyword>
<keyword id="KW-0963">Cytoplasm</keyword>
<keyword id="KW-0996">Nickel insertion</keyword>
<keyword id="KW-1185">Reference proteome</keyword>
<accession>Q1GJQ2</accession>
<evidence type="ECO:0000255" key="1">
    <source>
        <dbReference type="HAMAP-Rule" id="MF_01385"/>
    </source>
</evidence>
<feature type="chain" id="PRO_0000344177" description="Urease accessory protein UreF">
    <location>
        <begin position="1"/>
        <end position="214"/>
    </location>
</feature>
<sequence length="214" mass="23039">MTSEATLKLMQWLSPAYPVGAFAYSHGLEGAVSEGHVRDGDTLSDWLSDLLTHGGARSDALLLACAYRTETAESLAEIDDTARAFCPSAERLQETDLQGAAFCRTTAAIWDTALPSLTYPVAVGHAARLNDVALDLTLNMYLHAFLSNLVAAGQRLLSLGQTEAQQRLNACGPQLRRTVDAALSGTIDDLFGASFAADIASMRHETQYSRIFRS</sequence>
<proteinExistence type="inferred from homology"/>
<comment type="function">
    <text evidence="1">Required for maturation of urease via the functional incorporation of the urease nickel metallocenter.</text>
</comment>
<comment type="subunit">
    <text evidence="1">UreD, UreF and UreG form a complex that acts as a GTP-hydrolysis-dependent molecular chaperone, activating the urease apoprotein by helping to assemble the nickel containing metallocenter of UreC. The UreE protein probably delivers the nickel.</text>
</comment>
<comment type="subcellular location">
    <subcellularLocation>
        <location evidence="1">Cytoplasm</location>
    </subcellularLocation>
</comment>
<comment type="similarity">
    <text evidence="1">Belongs to the UreF family.</text>
</comment>
<gene>
    <name evidence="1" type="primary">ureF</name>
    <name type="ordered locus">TM1040_0381</name>
</gene>
<organism>
    <name type="scientific">Ruegeria sp. (strain TM1040)</name>
    <name type="common">Silicibacter sp.</name>
    <dbReference type="NCBI Taxonomy" id="292414"/>
    <lineage>
        <taxon>Bacteria</taxon>
        <taxon>Pseudomonadati</taxon>
        <taxon>Pseudomonadota</taxon>
        <taxon>Alphaproteobacteria</taxon>
        <taxon>Rhodobacterales</taxon>
        <taxon>Roseobacteraceae</taxon>
        <taxon>Ruegeria</taxon>
    </lineage>
</organism>
<name>UREF_RUEST</name>
<reference key="1">
    <citation type="submission" date="2006-05" db="EMBL/GenBank/DDBJ databases">
        <title>Complete sequence of chromosome of Silicibacter sp. TM1040.</title>
        <authorList>
            <consortium name="US DOE Joint Genome Institute"/>
            <person name="Copeland A."/>
            <person name="Lucas S."/>
            <person name="Lapidus A."/>
            <person name="Barry K."/>
            <person name="Detter J.C."/>
            <person name="Glavina del Rio T."/>
            <person name="Hammon N."/>
            <person name="Israni S."/>
            <person name="Dalin E."/>
            <person name="Tice H."/>
            <person name="Pitluck S."/>
            <person name="Brettin T."/>
            <person name="Bruce D."/>
            <person name="Han C."/>
            <person name="Tapia R."/>
            <person name="Goodwin L."/>
            <person name="Thompson L.S."/>
            <person name="Gilna P."/>
            <person name="Schmutz J."/>
            <person name="Larimer F."/>
            <person name="Land M."/>
            <person name="Hauser L."/>
            <person name="Kyrpides N."/>
            <person name="Kim E."/>
            <person name="Belas R."/>
            <person name="Moran M.A."/>
            <person name="Buchan A."/>
            <person name="Gonzalez J.M."/>
            <person name="Schell M.A."/>
            <person name="Sun F."/>
            <person name="Richardson P."/>
        </authorList>
    </citation>
    <scope>NUCLEOTIDE SEQUENCE [LARGE SCALE GENOMIC DNA]</scope>
    <source>
        <strain>TM1040</strain>
    </source>
</reference>
<protein>
    <recommendedName>
        <fullName evidence="1">Urease accessory protein UreF</fullName>
    </recommendedName>
</protein>
<dbReference type="EMBL" id="CP000377">
    <property type="protein sequence ID" value="ABF63114.1"/>
    <property type="molecule type" value="Genomic_DNA"/>
</dbReference>
<dbReference type="RefSeq" id="WP_011537729.1">
    <property type="nucleotide sequence ID" value="NC_008044.1"/>
</dbReference>
<dbReference type="SMR" id="Q1GJQ2"/>
<dbReference type="STRING" id="292414.TM1040_0381"/>
<dbReference type="KEGG" id="sit:TM1040_0381"/>
<dbReference type="eggNOG" id="COG0830">
    <property type="taxonomic scope" value="Bacteria"/>
</dbReference>
<dbReference type="HOGENOM" id="CLU_049215_2_0_5"/>
<dbReference type="OrthoDB" id="9798772at2"/>
<dbReference type="Proteomes" id="UP000000636">
    <property type="component" value="Chromosome"/>
</dbReference>
<dbReference type="GO" id="GO:0005737">
    <property type="term" value="C:cytoplasm"/>
    <property type="evidence" value="ECO:0007669"/>
    <property type="project" value="UniProtKB-SubCell"/>
</dbReference>
<dbReference type="GO" id="GO:0016151">
    <property type="term" value="F:nickel cation binding"/>
    <property type="evidence" value="ECO:0007669"/>
    <property type="project" value="UniProtKB-UniRule"/>
</dbReference>
<dbReference type="Gene3D" id="1.10.4190.10">
    <property type="entry name" value="Urease accessory protein UreF"/>
    <property type="match status" value="1"/>
</dbReference>
<dbReference type="HAMAP" id="MF_01385">
    <property type="entry name" value="UreF"/>
    <property type="match status" value="1"/>
</dbReference>
<dbReference type="InterPro" id="IPR002639">
    <property type="entry name" value="UreF"/>
</dbReference>
<dbReference type="InterPro" id="IPR038277">
    <property type="entry name" value="UreF_sf"/>
</dbReference>
<dbReference type="PANTHER" id="PTHR33620">
    <property type="entry name" value="UREASE ACCESSORY PROTEIN F"/>
    <property type="match status" value="1"/>
</dbReference>
<dbReference type="PANTHER" id="PTHR33620:SF1">
    <property type="entry name" value="UREASE ACCESSORY PROTEIN F"/>
    <property type="match status" value="1"/>
</dbReference>
<dbReference type="Pfam" id="PF01730">
    <property type="entry name" value="UreF"/>
    <property type="match status" value="1"/>
</dbReference>
<dbReference type="PIRSF" id="PIRSF009467">
    <property type="entry name" value="Ureas_acces_UreF"/>
    <property type="match status" value="1"/>
</dbReference>